<organism>
    <name type="scientific">Campylobacter hominis (strain ATCC BAA-381 / DSM 21671 / CCUG 45161 / LMG 19568 / NCTC 13146 / CH001A)</name>
    <dbReference type="NCBI Taxonomy" id="360107"/>
    <lineage>
        <taxon>Bacteria</taxon>
        <taxon>Pseudomonadati</taxon>
        <taxon>Campylobacterota</taxon>
        <taxon>Epsilonproteobacteria</taxon>
        <taxon>Campylobacterales</taxon>
        <taxon>Campylobacteraceae</taxon>
        <taxon>Campylobacter</taxon>
    </lineage>
</organism>
<accession>A7I280</accession>
<protein>
    <recommendedName>
        <fullName evidence="1">Large ribosomal subunit protein bL9</fullName>
    </recommendedName>
    <alternativeName>
        <fullName evidence="2">50S ribosomal protein L9</fullName>
    </alternativeName>
</protein>
<name>RL9_CAMHC</name>
<evidence type="ECO:0000255" key="1">
    <source>
        <dbReference type="HAMAP-Rule" id="MF_00503"/>
    </source>
</evidence>
<evidence type="ECO:0000305" key="2"/>
<dbReference type="EMBL" id="CP000776">
    <property type="protein sequence ID" value="ABS50969.1"/>
    <property type="molecule type" value="Genomic_DNA"/>
</dbReference>
<dbReference type="RefSeq" id="WP_012108919.1">
    <property type="nucleotide sequence ID" value="NC_009714.1"/>
</dbReference>
<dbReference type="SMR" id="A7I280"/>
<dbReference type="STRING" id="360107.CHAB381_1063"/>
<dbReference type="KEGG" id="cha:CHAB381_1063"/>
<dbReference type="eggNOG" id="COG0359">
    <property type="taxonomic scope" value="Bacteria"/>
</dbReference>
<dbReference type="HOGENOM" id="CLU_078938_3_0_7"/>
<dbReference type="OrthoDB" id="9788336at2"/>
<dbReference type="Proteomes" id="UP000002407">
    <property type="component" value="Chromosome"/>
</dbReference>
<dbReference type="GO" id="GO:1990904">
    <property type="term" value="C:ribonucleoprotein complex"/>
    <property type="evidence" value="ECO:0007669"/>
    <property type="project" value="UniProtKB-KW"/>
</dbReference>
<dbReference type="GO" id="GO:0005840">
    <property type="term" value="C:ribosome"/>
    <property type="evidence" value="ECO:0007669"/>
    <property type="project" value="UniProtKB-KW"/>
</dbReference>
<dbReference type="GO" id="GO:0019843">
    <property type="term" value="F:rRNA binding"/>
    <property type="evidence" value="ECO:0007669"/>
    <property type="project" value="UniProtKB-UniRule"/>
</dbReference>
<dbReference type="GO" id="GO:0003735">
    <property type="term" value="F:structural constituent of ribosome"/>
    <property type="evidence" value="ECO:0007669"/>
    <property type="project" value="InterPro"/>
</dbReference>
<dbReference type="GO" id="GO:0006412">
    <property type="term" value="P:translation"/>
    <property type="evidence" value="ECO:0007669"/>
    <property type="project" value="UniProtKB-UniRule"/>
</dbReference>
<dbReference type="FunFam" id="3.40.5.10:FF:000002">
    <property type="entry name" value="50S ribosomal protein L9"/>
    <property type="match status" value="1"/>
</dbReference>
<dbReference type="Gene3D" id="3.10.430.100">
    <property type="entry name" value="Ribosomal protein L9, C-terminal domain"/>
    <property type="match status" value="1"/>
</dbReference>
<dbReference type="Gene3D" id="3.40.5.10">
    <property type="entry name" value="Ribosomal protein L9, N-terminal domain"/>
    <property type="match status" value="1"/>
</dbReference>
<dbReference type="HAMAP" id="MF_00503">
    <property type="entry name" value="Ribosomal_bL9"/>
    <property type="match status" value="1"/>
</dbReference>
<dbReference type="InterPro" id="IPR000244">
    <property type="entry name" value="Ribosomal_bL9"/>
</dbReference>
<dbReference type="InterPro" id="IPR009027">
    <property type="entry name" value="Ribosomal_bL9/RNase_H1_N"/>
</dbReference>
<dbReference type="InterPro" id="IPR020594">
    <property type="entry name" value="Ribosomal_bL9_bac/chp"/>
</dbReference>
<dbReference type="InterPro" id="IPR020069">
    <property type="entry name" value="Ribosomal_bL9_C"/>
</dbReference>
<dbReference type="InterPro" id="IPR036791">
    <property type="entry name" value="Ribosomal_bL9_C_sf"/>
</dbReference>
<dbReference type="InterPro" id="IPR020070">
    <property type="entry name" value="Ribosomal_bL9_N"/>
</dbReference>
<dbReference type="InterPro" id="IPR036935">
    <property type="entry name" value="Ribosomal_bL9_N_sf"/>
</dbReference>
<dbReference type="NCBIfam" id="TIGR00158">
    <property type="entry name" value="L9"/>
    <property type="match status" value="1"/>
</dbReference>
<dbReference type="PANTHER" id="PTHR21368">
    <property type="entry name" value="50S RIBOSOMAL PROTEIN L9"/>
    <property type="match status" value="1"/>
</dbReference>
<dbReference type="Pfam" id="PF03948">
    <property type="entry name" value="Ribosomal_L9_C"/>
    <property type="match status" value="1"/>
</dbReference>
<dbReference type="Pfam" id="PF01281">
    <property type="entry name" value="Ribosomal_L9_N"/>
    <property type="match status" value="1"/>
</dbReference>
<dbReference type="SUPFAM" id="SSF55658">
    <property type="entry name" value="L9 N-domain-like"/>
    <property type="match status" value="1"/>
</dbReference>
<dbReference type="SUPFAM" id="SSF55653">
    <property type="entry name" value="Ribosomal protein L9 C-domain"/>
    <property type="match status" value="1"/>
</dbReference>
<dbReference type="PROSITE" id="PS00651">
    <property type="entry name" value="RIBOSOMAL_L9"/>
    <property type="match status" value="1"/>
</dbReference>
<gene>
    <name evidence="1" type="primary">rplI</name>
    <name type="ordered locus">CHAB381_1063</name>
</gene>
<proteinExistence type="inferred from homology"/>
<comment type="function">
    <text evidence="1">Binds to the 23S rRNA.</text>
</comment>
<comment type="similarity">
    <text evidence="1">Belongs to the bacterial ribosomal protein bL9 family.</text>
</comment>
<sequence>MKILLIKDVKSLGKAGEVKEVKDGYANNFLIAKGFAKAATTEVLRRYESQKQKEAEDERYEIESLKTLSNTLKGVRVKIAKQVGSNNALFGSVTKDDVANALKEQKNIEIDKKLIELPQTKTIGIYDVNLKLKFGVTAKFEIEVVGE</sequence>
<feature type="chain" id="PRO_1000014761" description="Large ribosomal subunit protein bL9">
    <location>
        <begin position="1"/>
        <end position="147"/>
    </location>
</feature>
<reference key="1">
    <citation type="submission" date="2007-07" db="EMBL/GenBank/DDBJ databases">
        <title>Complete genome sequence of Campylobacter hominis ATCC BAA-381, a commensal isolated from the human gastrointestinal tract.</title>
        <authorList>
            <person name="Fouts D.E."/>
            <person name="Mongodin E.F."/>
            <person name="Puiu D."/>
            <person name="Sebastian Y."/>
            <person name="Miller W.G."/>
            <person name="Mandrell R.E."/>
            <person name="Nelson K.E."/>
        </authorList>
    </citation>
    <scope>NUCLEOTIDE SEQUENCE [LARGE SCALE GENOMIC DNA]</scope>
    <source>
        <strain>ATCC BAA-381 / DSM 21671 / CCUG 45161 / LMG 19568 / NCTC 13146 / CH001A</strain>
    </source>
</reference>
<keyword id="KW-1185">Reference proteome</keyword>
<keyword id="KW-0687">Ribonucleoprotein</keyword>
<keyword id="KW-0689">Ribosomal protein</keyword>
<keyword id="KW-0694">RNA-binding</keyword>
<keyword id="KW-0699">rRNA-binding</keyword>